<reference key="1">
    <citation type="journal article" date="2005" name="Nature">
        <title>Genome sequencing and analysis of Aspergillus oryzae.</title>
        <authorList>
            <person name="Machida M."/>
            <person name="Asai K."/>
            <person name="Sano M."/>
            <person name="Tanaka T."/>
            <person name="Kumagai T."/>
            <person name="Terai G."/>
            <person name="Kusumoto K."/>
            <person name="Arima T."/>
            <person name="Akita O."/>
            <person name="Kashiwagi Y."/>
            <person name="Abe K."/>
            <person name="Gomi K."/>
            <person name="Horiuchi H."/>
            <person name="Kitamoto K."/>
            <person name="Kobayashi T."/>
            <person name="Takeuchi M."/>
            <person name="Denning D.W."/>
            <person name="Galagan J.E."/>
            <person name="Nierman W.C."/>
            <person name="Yu J."/>
            <person name="Archer D.B."/>
            <person name="Bennett J.W."/>
            <person name="Bhatnagar D."/>
            <person name="Cleveland T.E."/>
            <person name="Fedorova N.D."/>
            <person name="Gotoh O."/>
            <person name="Horikawa H."/>
            <person name="Hosoyama A."/>
            <person name="Ichinomiya M."/>
            <person name="Igarashi R."/>
            <person name="Iwashita K."/>
            <person name="Juvvadi P.R."/>
            <person name="Kato M."/>
            <person name="Kato Y."/>
            <person name="Kin T."/>
            <person name="Kokubun A."/>
            <person name="Maeda H."/>
            <person name="Maeyama N."/>
            <person name="Maruyama J."/>
            <person name="Nagasaki H."/>
            <person name="Nakajima T."/>
            <person name="Oda K."/>
            <person name="Okada K."/>
            <person name="Paulsen I."/>
            <person name="Sakamoto K."/>
            <person name="Sawano T."/>
            <person name="Takahashi M."/>
            <person name="Takase K."/>
            <person name="Terabayashi Y."/>
            <person name="Wortman J.R."/>
            <person name="Yamada O."/>
            <person name="Yamagata Y."/>
            <person name="Anazawa H."/>
            <person name="Hata Y."/>
            <person name="Koide Y."/>
            <person name="Komori T."/>
            <person name="Koyama Y."/>
            <person name="Minetoki T."/>
            <person name="Suharnan S."/>
            <person name="Tanaka A."/>
            <person name="Isono K."/>
            <person name="Kuhara S."/>
            <person name="Ogasawara N."/>
            <person name="Kikuchi H."/>
        </authorList>
    </citation>
    <scope>NUCLEOTIDE SEQUENCE [LARGE SCALE GENOMIC DNA]</scope>
    <source>
        <strain>ATCC 42149 / RIB 40</strain>
    </source>
</reference>
<accession>Q2UGP9</accession>
<keyword id="KW-0963">Cytoplasm</keyword>
<keyword id="KW-1185">Reference proteome</keyword>
<gene>
    <name type="primary">rtc5</name>
    <name type="ORF">AO090023000761</name>
</gene>
<comment type="function">
    <text evidence="1">May be involved in a process influencing telomere capping.</text>
</comment>
<comment type="subcellular location">
    <subcellularLocation>
        <location evidence="1">Cytoplasm</location>
    </subcellularLocation>
</comment>
<comment type="similarity">
    <text evidence="4">Belongs to the RTC5 family.</text>
</comment>
<proteinExistence type="inferred from homology"/>
<protein>
    <recommendedName>
        <fullName>Restriction of telomere capping protein 5</fullName>
    </recommendedName>
</protein>
<evidence type="ECO:0000250" key="1"/>
<evidence type="ECO:0000255" key="2">
    <source>
        <dbReference type="PROSITE-ProRule" id="PRU01234"/>
    </source>
</evidence>
<evidence type="ECO:0000256" key="3">
    <source>
        <dbReference type="SAM" id="MobiDB-lite"/>
    </source>
</evidence>
<evidence type="ECO:0000305" key="4"/>
<organism>
    <name type="scientific">Aspergillus oryzae (strain ATCC 42149 / RIB 40)</name>
    <name type="common">Yellow koji mold</name>
    <dbReference type="NCBI Taxonomy" id="510516"/>
    <lineage>
        <taxon>Eukaryota</taxon>
        <taxon>Fungi</taxon>
        <taxon>Dikarya</taxon>
        <taxon>Ascomycota</taxon>
        <taxon>Pezizomycotina</taxon>
        <taxon>Eurotiomycetes</taxon>
        <taxon>Eurotiomycetidae</taxon>
        <taxon>Eurotiales</taxon>
        <taxon>Aspergillaceae</taxon>
        <taxon>Aspergillus</taxon>
        <taxon>Aspergillus subgen. Circumdati</taxon>
    </lineage>
</organism>
<name>RTC5_ASPOR</name>
<dbReference type="EMBL" id="BA000051">
    <property type="protein sequence ID" value="BAE59266.1"/>
    <property type="molecule type" value="Genomic_DNA"/>
</dbReference>
<dbReference type="RefSeq" id="XP_001821268.1">
    <property type="nucleotide sequence ID" value="XM_001821216.2"/>
</dbReference>
<dbReference type="SMR" id="Q2UGP9"/>
<dbReference type="STRING" id="510516.Q2UGP9"/>
<dbReference type="EnsemblFungi" id="BAE59266">
    <property type="protein sequence ID" value="BAE59266"/>
    <property type="gene ID" value="AO090023000761"/>
</dbReference>
<dbReference type="GeneID" id="5993270"/>
<dbReference type="KEGG" id="aor:AO090023000761"/>
<dbReference type="VEuPathDB" id="FungiDB:AO090023000761"/>
<dbReference type="HOGENOM" id="CLU_011918_1_0_1"/>
<dbReference type="OMA" id="KWEFEAR"/>
<dbReference type="OrthoDB" id="111490at5052"/>
<dbReference type="Proteomes" id="UP000006564">
    <property type="component" value="Chromosome 3"/>
</dbReference>
<dbReference type="GO" id="GO:0005737">
    <property type="term" value="C:cytoplasm"/>
    <property type="evidence" value="ECO:0007669"/>
    <property type="project" value="UniProtKB-SubCell"/>
</dbReference>
<dbReference type="InterPro" id="IPR006571">
    <property type="entry name" value="TLDc_dom"/>
</dbReference>
<dbReference type="Pfam" id="PF07534">
    <property type="entry name" value="TLD"/>
    <property type="match status" value="1"/>
</dbReference>
<dbReference type="SMART" id="SM00584">
    <property type="entry name" value="TLDc"/>
    <property type="match status" value="1"/>
</dbReference>
<dbReference type="PROSITE" id="PS51886">
    <property type="entry name" value="TLDC"/>
    <property type="match status" value="1"/>
</dbReference>
<sequence>MGLSQSTELGQASSPEELSHMLAERFATKCFTPLELTHFKDNFFTRAAGQGDVKYWNEKILSDFLAIPDSSDAECPLDAGPVIFRMVSYLGAFPFQNTLAPSVLTFEAMVKVVVLLTERYGKVLRRARKDRIRLLFGSLADVGRKDIDQPANDGNSKEDKVDSSATKSHAPGFSVDEPTNDDYEDDDDDLALAALESLDAIEVFRHDSRIDKAVYEARISIATFRRLLMLLLVISPLRPLEPVKAYTSDLNEGRMRTVRQQADNILAAFPQEESGGISYRAFAKTIETSLPYLFDPLTPLFEHLLFSRNLNLSQKRDRSDSTDPTDQTSETPLPLSASIMLPGSFESAILNPSIVSHLSFFLPSTNGSKNLLRDNLRLHPIFSTAAHGSSLTSFSHNVLTWQSGTLLLLEGAVAEPSGEQMVTLGAYLPQPWKTGSSAQSSRLSETSALPCLFQLSPKHLLLPGNPSSSIQNPDTPAAYFSNHSGISLGCRIPPASRSQRLVPSPLGAGSLTIDTSLETAEFHVAPFGHNGVFLPAGTSSTSDNATKTHIDIYNLELWGFVPDPGVSSSEKSAIELQKAKWDFEAREAERRRSLNIKAGAGDSAMEGARWLLETAGIIGDSHGRGGGSV</sequence>
<feature type="chain" id="PRO_0000408818" description="Restriction of telomere capping protein 5">
    <location>
        <begin position="1"/>
        <end position="629"/>
    </location>
</feature>
<feature type="domain" description="TLDc" evidence="2">
    <location>
        <begin position="348"/>
        <end position="561"/>
    </location>
</feature>
<feature type="region of interest" description="Disordered" evidence="3">
    <location>
        <begin position="147"/>
        <end position="181"/>
    </location>
</feature>
<feature type="region of interest" description="Disordered" evidence="3">
    <location>
        <begin position="315"/>
        <end position="334"/>
    </location>
</feature>
<feature type="compositionally biased region" description="Polar residues" evidence="3">
    <location>
        <begin position="322"/>
        <end position="331"/>
    </location>
</feature>